<sequence>MSNKYSLNDDELQLFRTSITGTKKLRQDTYTHKPLRRKIGELPAKRALQEQVDASFYFSDEFQPQLDTEGPTRYVRPGASHYELKKLRRGDYSPELFLDLHGLTQLQAKQELGALLAACRREHVYCACVMHGHGKHILKQQTPLWLAQHPDVLAFHQAPKEFGGNAALLVLVALEAPSLE</sequence>
<organism>
    <name type="scientific">Pectobacterium atrosepticum (strain SCRI 1043 / ATCC BAA-672)</name>
    <name type="common">Erwinia carotovora subsp. atroseptica</name>
    <dbReference type="NCBI Taxonomy" id="218491"/>
    <lineage>
        <taxon>Bacteria</taxon>
        <taxon>Pseudomonadati</taxon>
        <taxon>Pseudomonadota</taxon>
        <taxon>Gammaproteobacteria</taxon>
        <taxon>Enterobacterales</taxon>
        <taxon>Pectobacteriaceae</taxon>
        <taxon>Pectobacterium</taxon>
    </lineage>
</organism>
<keyword id="KW-0255">Endonuclease</keyword>
<keyword id="KW-0378">Hydrolase</keyword>
<keyword id="KW-0540">Nuclease</keyword>
<keyword id="KW-1185">Reference proteome</keyword>
<keyword id="KW-0694">RNA-binding</keyword>
<keyword id="KW-0699">rRNA-binding</keyword>
<comment type="function">
    <text evidence="1">Acts as a ribosome collision sensor. Detects stalled/collided disomes (pairs of ribosomes where the leading ribosome is stalled and a second ribosome has collided with it) and endonucleolytically cleaves mRNA at the 5' boundary of the stalled ribosome. Stalled/collided disomes form a new interface (primarily via the 30S subunits) that binds SmrB. Cleaved mRNA becomes available for tmRNA ligation, leading to ribosomal subunit dissociation and rescue of stalled ribosomes.</text>
</comment>
<comment type="subunit">
    <text evidence="1">Associates with collided ribosomes, but not with correctly translating polysomes.</text>
</comment>
<comment type="similarity">
    <text evidence="1">Belongs to the SmrB family.</text>
</comment>
<evidence type="ECO:0000255" key="1">
    <source>
        <dbReference type="HAMAP-Rule" id="MF_01042"/>
    </source>
</evidence>
<feature type="chain" id="PRO_1000084352" description="Ribosome rescue factor SmrB">
    <location>
        <begin position="1"/>
        <end position="180"/>
    </location>
</feature>
<feature type="domain" description="Smr" evidence="1">
    <location>
        <begin position="98"/>
        <end position="173"/>
    </location>
</feature>
<gene>
    <name evidence="1" type="primary">smrB</name>
    <name type="ordered locus">ECA3071</name>
</gene>
<reference key="1">
    <citation type="journal article" date="2004" name="Proc. Natl. Acad. Sci. U.S.A.">
        <title>Genome sequence of the enterobacterial phytopathogen Erwinia carotovora subsp. atroseptica and characterization of virulence factors.</title>
        <authorList>
            <person name="Bell K.S."/>
            <person name="Sebaihia M."/>
            <person name="Pritchard L."/>
            <person name="Holden M.T.G."/>
            <person name="Hyman L.J."/>
            <person name="Holeva M.C."/>
            <person name="Thomson N.R."/>
            <person name="Bentley S.D."/>
            <person name="Churcher L.J.C."/>
            <person name="Mungall K."/>
            <person name="Atkin R."/>
            <person name="Bason N."/>
            <person name="Brooks K."/>
            <person name="Chillingworth T."/>
            <person name="Clark K."/>
            <person name="Doggett J."/>
            <person name="Fraser A."/>
            <person name="Hance Z."/>
            <person name="Hauser H."/>
            <person name="Jagels K."/>
            <person name="Moule S."/>
            <person name="Norbertczak H."/>
            <person name="Ormond D."/>
            <person name="Price C."/>
            <person name="Quail M.A."/>
            <person name="Sanders M."/>
            <person name="Walker D."/>
            <person name="Whitehead S."/>
            <person name="Salmond G.P.C."/>
            <person name="Birch P.R.J."/>
            <person name="Parkhill J."/>
            <person name="Toth I.K."/>
        </authorList>
    </citation>
    <scope>NUCLEOTIDE SEQUENCE [LARGE SCALE GENOMIC DNA]</scope>
    <source>
        <strain>SCRI 1043 / ATCC BAA-672</strain>
    </source>
</reference>
<accession>Q6D2M4</accession>
<proteinExistence type="inferred from homology"/>
<dbReference type="EC" id="3.1.-.-" evidence="1"/>
<dbReference type="EMBL" id="BX950851">
    <property type="protein sequence ID" value="CAG75970.1"/>
    <property type="molecule type" value="Genomic_DNA"/>
</dbReference>
<dbReference type="RefSeq" id="WP_011094595.1">
    <property type="nucleotide sequence ID" value="NC_004547.2"/>
</dbReference>
<dbReference type="SMR" id="Q6D2M4"/>
<dbReference type="STRING" id="218491.ECA3071"/>
<dbReference type="KEGG" id="eca:ECA3071"/>
<dbReference type="PATRIC" id="fig|218491.5.peg.3104"/>
<dbReference type="eggNOG" id="COG2840">
    <property type="taxonomic scope" value="Bacteria"/>
</dbReference>
<dbReference type="HOGENOM" id="CLU_055978_4_0_6"/>
<dbReference type="OrthoDB" id="5795446at2"/>
<dbReference type="Proteomes" id="UP000007966">
    <property type="component" value="Chromosome"/>
</dbReference>
<dbReference type="GO" id="GO:0004521">
    <property type="term" value="F:RNA endonuclease activity"/>
    <property type="evidence" value="ECO:0007669"/>
    <property type="project" value="UniProtKB-UniRule"/>
</dbReference>
<dbReference type="GO" id="GO:0019843">
    <property type="term" value="F:rRNA binding"/>
    <property type="evidence" value="ECO:0007669"/>
    <property type="project" value="UniProtKB-UniRule"/>
</dbReference>
<dbReference type="GO" id="GO:0072344">
    <property type="term" value="P:rescue of stalled ribosome"/>
    <property type="evidence" value="ECO:0007669"/>
    <property type="project" value="UniProtKB-UniRule"/>
</dbReference>
<dbReference type="Gene3D" id="3.30.1370.110">
    <property type="match status" value="1"/>
</dbReference>
<dbReference type="HAMAP" id="MF_01042">
    <property type="entry name" value="SmrB"/>
    <property type="match status" value="1"/>
</dbReference>
<dbReference type="InterPro" id="IPR002625">
    <property type="entry name" value="Smr_dom"/>
</dbReference>
<dbReference type="InterPro" id="IPR036063">
    <property type="entry name" value="Smr_dom_sf"/>
</dbReference>
<dbReference type="InterPro" id="IPR022990">
    <property type="entry name" value="SmrB-like"/>
</dbReference>
<dbReference type="NCBIfam" id="NF003432">
    <property type="entry name" value="PRK04946.1"/>
    <property type="match status" value="1"/>
</dbReference>
<dbReference type="PANTHER" id="PTHR35562">
    <property type="entry name" value="DNA ENDONUCLEASE SMRA-RELATED"/>
    <property type="match status" value="1"/>
</dbReference>
<dbReference type="PANTHER" id="PTHR35562:SF1">
    <property type="entry name" value="UPF0115 PROTEIN YFCN"/>
    <property type="match status" value="1"/>
</dbReference>
<dbReference type="Pfam" id="PF01713">
    <property type="entry name" value="Smr"/>
    <property type="match status" value="1"/>
</dbReference>
<dbReference type="SMART" id="SM00463">
    <property type="entry name" value="SMR"/>
    <property type="match status" value="1"/>
</dbReference>
<dbReference type="SUPFAM" id="SSF160443">
    <property type="entry name" value="SMR domain-like"/>
    <property type="match status" value="1"/>
</dbReference>
<dbReference type="PROSITE" id="PS50828">
    <property type="entry name" value="SMR"/>
    <property type="match status" value="1"/>
</dbReference>
<name>SMRB_PECAS</name>
<protein>
    <recommendedName>
        <fullName evidence="1">Ribosome rescue factor SmrB</fullName>
        <ecNumber evidence="1">3.1.-.-</ecNumber>
    </recommendedName>
</protein>